<name>FADJ_ECOLC</name>
<feature type="chain" id="PRO_1000088061" description="Fatty acid oxidation complex subunit alpha">
    <location>
        <begin position="1"/>
        <end position="714"/>
    </location>
</feature>
<feature type="region of interest" description="Enoyl-CoA hydratase" evidence="1">
    <location>
        <begin position="1"/>
        <end position="190"/>
    </location>
</feature>
<feature type="region of interest" description="3-hydroxyacyl-CoA dehydrogenase" evidence="1">
    <location>
        <begin position="306"/>
        <end position="714"/>
    </location>
</feature>
<feature type="site" description="Important for catalytic activity" evidence="1">
    <location>
        <position position="118"/>
    </location>
</feature>
<feature type="site" description="Important for catalytic activity" evidence="1">
    <location>
        <position position="140"/>
    </location>
</feature>
<gene>
    <name evidence="1" type="primary">fadJ</name>
    <name type="ordered locus">EcolC_1312</name>
</gene>
<proteinExistence type="inferred from homology"/>
<dbReference type="EC" id="4.2.1.17" evidence="1"/>
<dbReference type="EC" id="5.1.2.3" evidence="1"/>
<dbReference type="EC" id="1.1.1.35" evidence="1"/>
<dbReference type="EMBL" id="CP000946">
    <property type="protein sequence ID" value="ACA76978.1"/>
    <property type="molecule type" value="Genomic_DNA"/>
</dbReference>
<dbReference type="RefSeq" id="WP_000424989.1">
    <property type="nucleotide sequence ID" value="NZ_MTFT01000028.1"/>
</dbReference>
<dbReference type="SMR" id="B1IXA5"/>
<dbReference type="KEGG" id="ecl:EcolC_1312"/>
<dbReference type="HOGENOM" id="CLU_009834_16_1_6"/>
<dbReference type="UniPathway" id="UPA00659"/>
<dbReference type="GO" id="GO:0005737">
    <property type="term" value="C:cytoplasm"/>
    <property type="evidence" value="ECO:0007669"/>
    <property type="project" value="UniProtKB-SubCell"/>
</dbReference>
<dbReference type="GO" id="GO:0008692">
    <property type="term" value="F:3-hydroxybutyryl-CoA epimerase activity"/>
    <property type="evidence" value="ECO:0007669"/>
    <property type="project" value="UniProtKB-UniRule"/>
</dbReference>
<dbReference type="GO" id="GO:0004300">
    <property type="term" value="F:enoyl-CoA hydratase activity"/>
    <property type="evidence" value="ECO:0007669"/>
    <property type="project" value="UniProtKB-UniRule"/>
</dbReference>
<dbReference type="GO" id="GO:0016509">
    <property type="term" value="F:long-chain-3-hydroxyacyl-CoA dehydrogenase activity"/>
    <property type="evidence" value="ECO:0007669"/>
    <property type="project" value="TreeGrafter"/>
</dbReference>
<dbReference type="GO" id="GO:0070403">
    <property type="term" value="F:NAD+ binding"/>
    <property type="evidence" value="ECO:0007669"/>
    <property type="project" value="InterPro"/>
</dbReference>
<dbReference type="GO" id="GO:0006635">
    <property type="term" value="P:fatty acid beta-oxidation"/>
    <property type="evidence" value="ECO:0007669"/>
    <property type="project" value="UniProtKB-UniRule"/>
</dbReference>
<dbReference type="CDD" id="cd06558">
    <property type="entry name" value="crotonase-like"/>
    <property type="match status" value="1"/>
</dbReference>
<dbReference type="FunFam" id="1.10.1040.50:FF:000003">
    <property type="entry name" value="Fatty acid oxidation complex subunit alpha"/>
    <property type="match status" value="1"/>
</dbReference>
<dbReference type="FunFam" id="3.90.226.10:FF:000011">
    <property type="entry name" value="Fatty acid oxidation complex subunit alpha"/>
    <property type="match status" value="1"/>
</dbReference>
<dbReference type="FunFam" id="3.40.50.720:FF:000009">
    <property type="entry name" value="Fatty oxidation complex, alpha subunit"/>
    <property type="match status" value="1"/>
</dbReference>
<dbReference type="Gene3D" id="1.10.1040.50">
    <property type="match status" value="1"/>
</dbReference>
<dbReference type="Gene3D" id="3.90.226.10">
    <property type="entry name" value="2-enoyl-CoA Hydratase, Chain A, domain 1"/>
    <property type="match status" value="1"/>
</dbReference>
<dbReference type="Gene3D" id="3.40.50.720">
    <property type="entry name" value="NAD(P)-binding Rossmann-like Domain"/>
    <property type="match status" value="1"/>
</dbReference>
<dbReference type="HAMAP" id="MF_01617">
    <property type="entry name" value="FadJ"/>
    <property type="match status" value="1"/>
</dbReference>
<dbReference type="InterPro" id="IPR006180">
    <property type="entry name" value="3-OHacyl-CoA_DH_CS"/>
</dbReference>
<dbReference type="InterPro" id="IPR006176">
    <property type="entry name" value="3-OHacyl-CoA_DH_NAD-bd"/>
</dbReference>
<dbReference type="InterPro" id="IPR006108">
    <property type="entry name" value="3HC_DH_C"/>
</dbReference>
<dbReference type="InterPro" id="IPR008927">
    <property type="entry name" value="6-PGluconate_DH-like_C_sf"/>
</dbReference>
<dbReference type="InterPro" id="IPR029045">
    <property type="entry name" value="ClpP/crotonase-like_dom_sf"/>
</dbReference>
<dbReference type="InterPro" id="IPR001753">
    <property type="entry name" value="Enoyl-CoA_hydra/iso"/>
</dbReference>
<dbReference type="InterPro" id="IPR050136">
    <property type="entry name" value="FA_oxidation_alpha_subunit"/>
</dbReference>
<dbReference type="InterPro" id="IPR012802">
    <property type="entry name" value="FadJ"/>
</dbReference>
<dbReference type="InterPro" id="IPR036291">
    <property type="entry name" value="NAD(P)-bd_dom_sf"/>
</dbReference>
<dbReference type="NCBIfam" id="TIGR02440">
    <property type="entry name" value="FadJ"/>
    <property type="match status" value="1"/>
</dbReference>
<dbReference type="NCBIfam" id="NF008363">
    <property type="entry name" value="PRK11154.1"/>
    <property type="match status" value="1"/>
</dbReference>
<dbReference type="PANTHER" id="PTHR43612">
    <property type="entry name" value="TRIFUNCTIONAL ENZYME SUBUNIT ALPHA"/>
    <property type="match status" value="1"/>
</dbReference>
<dbReference type="PANTHER" id="PTHR43612:SF3">
    <property type="entry name" value="TRIFUNCTIONAL ENZYME SUBUNIT ALPHA, MITOCHONDRIAL"/>
    <property type="match status" value="1"/>
</dbReference>
<dbReference type="Pfam" id="PF00725">
    <property type="entry name" value="3HCDH"/>
    <property type="match status" value="2"/>
</dbReference>
<dbReference type="Pfam" id="PF02737">
    <property type="entry name" value="3HCDH_N"/>
    <property type="match status" value="1"/>
</dbReference>
<dbReference type="Pfam" id="PF00378">
    <property type="entry name" value="ECH_1"/>
    <property type="match status" value="1"/>
</dbReference>
<dbReference type="SUPFAM" id="SSF48179">
    <property type="entry name" value="6-phosphogluconate dehydrogenase C-terminal domain-like"/>
    <property type="match status" value="2"/>
</dbReference>
<dbReference type="SUPFAM" id="SSF52096">
    <property type="entry name" value="ClpP/crotonase"/>
    <property type="match status" value="1"/>
</dbReference>
<dbReference type="SUPFAM" id="SSF51735">
    <property type="entry name" value="NAD(P)-binding Rossmann-fold domains"/>
    <property type="match status" value="1"/>
</dbReference>
<dbReference type="PROSITE" id="PS00067">
    <property type="entry name" value="3HCDH"/>
    <property type="match status" value="1"/>
</dbReference>
<evidence type="ECO:0000255" key="1">
    <source>
        <dbReference type="HAMAP-Rule" id="MF_01617"/>
    </source>
</evidence>
<sequence>MEMASAFTLNVRLDNIAIITIDVPDEKMNTLKAEFASQVRAIIKQLRENKELRGVVFISAKPDNFIAGADINMIGNCKTAQEAEALARQGQQLMAEIHALPIPVIAAIHGACLGGGLELALACHGRVCTDDPKTVLGLPEVQLGLLPGSGGTQRLPRLIGVSTALEMILTGKQLRAKQALKLGLVDDVVPHSILLEAAVELVKQDRPSSRPLPVRERILAGPLGRALLFKMVGKKTEHKTQGNYPATERILEVVETGLAQGTSSGYDAEARAFGELAMTPQSQALRSIFFASTDVKKDPGSDAPPAPLNSVGILGGGLMGGGIAYVTACKAGLPVRIKDINPQGINHALKYSWDQLEGKVRRRHLKASERDKQLALISGTTDYRGFAHRDLIIEAVFENLELKQQMVAEVEQNCAAHTIFASNTSSLPIGDIAAHATRPEQVIGLHFFSPVEKMPLVEIIPHAGTSAQTIATTVKLAKKQGKTPIVVRDKAGFYVNRILAPYINEAIRMLTEGERVEHIDAALVKFGFPVGPIQLLDEVGIDTGTKIIPVLEAAYGERFSAPANVVSSILNDDRKGRKNGRGFYLYGQKGRKSKKQVDPAIYPLIGAQGQGRLSAPQVAERCVMLMLNEAVRCVDEQVIRSVRDGDIGAVFGIGFPPFLGGPFRYIDSLGAGEVVAIMQRLATQYGSRFTPCERLVEMSKRGESFWKTTATDLQ</sequence>
<organism>
    <name type="scientific">Escherichia coli (strain ATCC 8739 / DSM 1576 / NBRC 3972 / NCIMB 8545 / WDCM 00012 / Crooks)</name>
    <dbReference type="NCBI Taxonomy" id="481805"/>
    <lineage>
        <taxon>Bacteria</taxon>
        <taxon>Pseudomonadati</taxon>
        <taxon>Pseudomonadota</taxon>
        <taxon>Gammaproteobacteria</taxon>
        <taxon>Enterobacterales</taxon>
        <taxon>Enterobacteriaceae</taxon>
        <taxon>Escherichia</taxon>
    </lineage>
</organism>
<comment type="function">
    <text evidence="1">Catalyzes the formation of a hydroxyacyl-CoA by addition of water on enoyl-CoA. Also exhibits 3-hydroxyacyl-CoA epimerase and 3-hydroxyacyl-CoA dehydrogenase activities.</text>
</comment>
<comment type="catalytic activity">
    <reaction evidence="1">
        <text>a (3S)-3-hydroxyacyl-CoA = a (2E)-enoyl-CoA + H2O</text>
        <dbReference type="Rhea" id="RHEA:16105"/>
        <dbReference type="ChEBI" id="CHEBI:15377"/>
        <dbReference type="ChEBI" id="CHEBI:57318"/>
        <dbReference type="ChEBI" id="CHEBI:58856"/>
        <dbReference type="EC" id="4.2.1.17"/>
    </reaction>
</comment>
<comment type="catalytic activity">
    <reaction evidence="1">
        <text>a 4-saturated-(3S)-3-hydroxyacyl-CoA = a (3E)-enoyl-CoA + H2O</text>
        <dbReference type="Rhea" id="RHEA:20724"/>
        <dbReference type="ChEBI" id="CHEBI:15377"/>
        <dbReference type="ChEBI" id="CHEBI:58521"/>
        <dbReference type="ChEBI" id="CHEBI:137480"/>
        <dbReference type="EC" id="4.2.1.17"/>
    </reaction>
</comment>
<comment type="catalytic activity">
    <reaction evidence="1">
        <text>a (3S)-3-hydroxyacyl-CoA + NAD(+) = a 3-oxoacyl-CoA + NADH + H(+)</text>
        <dbReference type="Rhea" id="RHEA:22432"/>
        <dbReference type="ChEBI" id="CHEBI:15378"/>
        <dbReference type="ChEBI" id="CHEBI:57318"/>
        <dbReference type="ChEBI" id="CHEBI:57540"/>
        <dbReference type="ChEBI" id="CHEBI:57945"/>
        <dbReference type="ChEBI" id="CHEBI:90726"/>
        <dbReference type="EC" id="1.1.1.35"/>
    </reaction>
</comment>
<comment type="catalytic activity">
    <reaction evidence="1">
        <text>(3S)-3-hydroxybutanoyl-CoA = (3R)-3-hydroxybutanoyl-CoA</text>
        <dbReference type="Rhea" id="RHEA:21760"/>
        <dbReference type="ChEBI" id="CHEBI:57315"/>
        <dbReference type="ChEBI" id="CHEBI:57316"/>
        <dbReference type="EC" id="5.1.2.3"/>
    </reaction>
</comment>
<comment type="pathway">
    <text evidence="1">Lipid metabolism; fatty acid beta-oxidation.</text>
</comment>
<comment type="subunit">
    <text evidence="1">Heterotetramer of two alpha chains (FadJ) and two beta chains (FadI).</text>
</comment>
<comment type="subcellular location">
    <subcellularLocation>
        <location evidence="1">Cytoplasm</location>
    </subcellularLocation>
</comment>
<comment type="similarity">
    <text evidence="1">In the N-terminal section; belongs to the enoyl-CoA hydratase/isomerase family.</text>
</comment>
<comment type="similarity">
    <text evidence="1">In the central section; belongs to the 3-hydroxyacyl-CoA dehydrogenase family.</text>
</comment>
<accession>B1IXA5</accession>
<protein>
    <recommendedName>
        <fullName evidence="1">Fatty acid oxidation complex subunit alpha</fullName>
    </recommendedName>
    <domain>
        <recommendedName>
            <fullName evidence="1">Enoyl-CoA hydratase/3-hydroxybutyryl-CoA epimerase</fullName>
            <ecNumber evidence="1">4.2.1.17</ecNumber>
            <ecNumber evidence="1">5.1.2.3</ecNumber>
        </recommendedName>
    </domain>
    <domain>
        <recommendedName>
            <fullName evidence="1">3-hydroxyacyl-CoA dehydrogenase</fullName>
            <ecNumber evidence="1">1.1.1.35</ecNumber>
        </recommendedName>
    </domain>
</protein>
<reference key="1">
    <citation type="submission" date="2008-02" db="EMBL/GenBank/DDBJ databases">
        <title>Complete sequence of Escherichia coli C str. ATCC 8739.</title>
        <authorList>
            <person name="Copeland A."/>
            <person name="Lucas S."/>
            <person name="Lapidus A."/>
            <person name="Glavina del Rio T."/>
            <person name="Dalin E."/>
            <person name="Tice H."/>
            <person name="Bruce D."/>
            <person name="Goodwin L."/>
            <person name="Pitluck S."/>
            <person name="Kiss H."/>
            <person name="Brettin T."/>
            <person name="Detter J.C."/>
            <person name="Han C."/>
            <person name="Kuske C.R."/>
            <person name="Schmutz J."/>
            <person name="Larimer F."/>
            <person name="Land M."/>
            <person name="Hauser L."/>
            <person name="Kyrpides N."/>
            <person name="Mikhailova N."/>
            <person name="Ingram L."/>
            <person name="Richardson P."/>
        </authorList>
    </citation>
    <scope>NUCLEOTIDE SEQUENCE [LARGE SCALE GENOMIC DNA]</scope>
    <source>
        <strain>ATCC 8739 / DSM 1576 / NBRC 3972 / NCIMB 8545 / WDCM 00012 / Crooks</strain>
    </source>
</reference>
<keyword id="KW-0963">Cytoplasm</keyword>
<keyword id="KW-0276">Fatty acid metabolism</keyword>
<keyword id="KW-0413">Isomerase</keyword>
<keyword id="KW-0442">Lipid degradation</keyword>
<keyword id="KW-0443">Lipid metabolism</keyword>
<keyword id="KW-0456">Lyase</keyword>
<keyword id="KW-0511">Multifunctional enzyme</keyword>
<keyword id="KW-0520">NAD</keyword>
<keyword id="KW-0560">Oxidoreductase</keyword>